<name>DAPE_ECOSE</name>
<evidence type="ECO:0000255" key="1">
    <source>
        <dbReference type="HAMAP-Rule" id="MF_01690"/>
    </source>
</evidence>
<protein>
    <recommendedName>
        <fullName evidence="1">Succinyl-diaminopimelate desuccinylase</fullName>
        <shortName evidence="1">SDAP desuccinylase</shortName>
        <ecNumber evidence="1">3.5.1.18</ecNumber>
    </recommendedName>
    <alternativeName>
        <fullName evidence="1">N-succinyl-LL-2,6-diaminoheptanedioate amidohydrolase</fullName>
    </alternativeName>
</protein>
<dbReference type="EC" id="3.5.1.18" evidence="1"/>
<dbReference type="EMBL" id="AP009240">
    <property type="protein sequence ID" value="BAG78277.1"/>
    <property type="molecule type" value="Genomic_DNA"/>
</dbReference>
<dbReference type="RefSeq" id="WP_001277809.1">
    <property type="nucleotide sequence ID" value="NC_011415.1"/>
</dbReference>
<dbReference type="SMR" id="B6I539"/>
<dbReference type="MEROPS" id="M20.010"/>
<dbReference type="GeneID" id="75204256"/>
<dbReference type="KEGG" id="ecy:ECSE_2753"/>
<dbReference type="HOGENOM" id="CLU_021802_4_0_6"/>
<dbReference type="UniPathway" id="UPA00034">
    <property type="reaction ID" value="UER00021"/>
</dbReference>
<dbReference type="Proteomes" id="UP000008199">
    <property type="component" value="Chromosome"/>
</dbReference>
<dbReference type="GO" id="GO:0008777">
    <property type="term" value="F:acetylornithine deacetylase activity"/>
    <property type="evidence" value="ECO:0007669"/>
    <property type="project" value="TreeGrafter"/>
</dbReference>
<dbReference type="GO" id="GO:0050897">
    <property type="term" value="F:cobalt ion binding"/>
    <property type="evidence" value="ECO:0007669"/>
    <property type="project" value="UniProtKB-UniRule"/>
</dbReference>
<dbReference type="GO" id="GO:0009014">
    <property type="term" value="F:succinyl-diaminopimelate desuccinylase activity"/>
    <property type="evidence" value="ECO:0007669"/>
    <property type="project" value="UniProtKB-UniRule"/>
</dbReference>
<dbReference type="GO" id="GO:0008270">
    <property type="term" value="F:zinc ion binding"/>
    <property type="evidence" value="ECO:0007669"/>
    <property type="project" value="UniProtKB-UniRule"/>
</dbReference>
<dbReference type="GO" id="GO:0019877">
    <property type="term" value="P:diaminopimelate biosynthetic process"/>
    <property type="evidence" value="ECO:0007669"/>
    <property type="project" value="UniProtKB-UniRule"/>
</dbReference>
<dbReference type="GO" id="GO:0006526">
    <property type="term" value="P:L-arginine biosynthetic process"/>
    <property type="evidence" value="ECO:0007669"/>
    <property type="project" value="TreeGrafter"/>
</dbReference>
<dbReference type="GO" id="GO:0009089">
    <property type="term" value="P:lysine biosynthetic process via diaminopimelate"/>
    <property type="evidence" value="ECO:0007669"/>
    <property type="project" value="UniProtKB-UniRule"/>
</dbReference>
<dbReference type="CDD" id="cd03891">
    <property type="entry name" value="M20_DapE_proteobac"/>
    <property type="match status" value="1"/>
</dbReference>
<dbReference type="FunFam" id="3.30.70.360:FF:000011">
    <property type="entry name" value="Succinyl-diaminopimelate desuccinylase"/>
    <property type="match status" value="1"/>
</dbReference>
<dbReference type="FunFam" id="3.40.630.10:FF:000005">
    <property type="entry name" value="Succinyl-diaminopimelate desuccinylase"/>
    <property type="match status" value="1"/>
</dbReference>
<dbReference type="FunFam" id="3.40.630.10:FF:000010">
    <property type="entry name" value="Succinyl-diaminopimelate desuccinylase"/>
    <property type="match status" value="1"/>
</dbReference>
<dbReference type="Gene3D" id="3.40.630.10">
    <property type="entry name" value="Zn peptidases"/>
    <property type="match status" value="2"/>
</dbReference>
<dbReference type="HAMAP" id="MF_01690">
    <property type="entry name" value="DapE"/>
    <property type="match status" value="1"/>
</dbReference>
<dbReference type="InterPro" id="IPR001261">
    <property type="entry name" value="ArgE/DapE_CS"/>
</dbReference>
<dbReference type="InterPro" id="IPR036264">
    <property type="entry name" value="Bact_exopeptidase_dim_dom"/>
</dbReference>
<dbReference type="InterPro" id="IPR005941">
    <property type="entry name" value="DapE_proteobac"/>
</dbReference>
<dbReference type="InterPro" id="IPR002933">
    <property type="entry name" value="Peptidase_M20"/>
</dbReference>
<dbReference type="InterPro" id="IPR011650">
    <property type="entry name" value="Peptidase_M20_dimer"/>
</dbReference>
<dbReference type="InterPro" id="IPR050072">
    <property type="entry name" value="Peptidase_M20A"/>
</dbReference>
<dbReference type="NCBIfam" id="TIGR01246">
    <property type="entry name" value="dapE_proteo"/>
    <property type="match status" value="1"/>
</dbReference>
<dbReference type="NCBIfam" id="NF009557">
    <property type="entry name" value="PRK13009.1"/>
    <property type="match status" value="1"/>
</dbReference>
<dbReference type="PANTHER" id="PTHR43808">
    <property type="entry name" value="ACETYLORNITHINE DEACETYLASE"/>
    <property type="match status" value="1"/>
</dbReference>
<dbReference type="PANTHER" id="PTHR43808:SF31">
    <property type="entry name" value="N-ACETYL-L-CITRULLINE DEACETYLASE"/>
    <property type="match status" value="1"/>
</dbReference>
<dbReference type="Pfam" id="PF07687">
    <property type="entry name" value="M20_dimer"/>
    <property type="match status" value="1"/>
</dbReference>
<dbReference type="Pfam" id="PF01546">
    <property type="entry name" value="Peptidase_M20"/>
    <property type="match status" value="1"/>
</dbReference>
<dbReference type="SUPFAM" id="SSF55031">
    <property type="entry name" value="Bacterial exopeptidase dimerisation domain"/>
    <property type="match status" value="1"/>
</dbReference>
<dbReference type="SUPFAM" id="SSF53187">
    <property type="entry name" value="Zn-dependent exopeptidases"/>
    <property type="match status" value="1"/>
</dbReference>
<dbReference type="PROSITE" id="PS00758">
    <property type="entry name" value="ARGE_DAPE_CPG2_1"/>
    <property type="match status" value="1"/>
</dbReference>
<dbReference type="PROSITE" id="PS00759">
    <property type="entry name" value="ARGE_DAPE_CPG2_2"/>
    <property type="match status" value="1"/>
</dbReference>
<gene>
    <name evidence="1" type="primary">dapE</name>
    <name type="ordered locus">ECSE_2753</name>
</gene>
<accession>B6I539</accession>
<organism>
    <name type="scientific">Escherichia coli (strain SE11)</name>
    <dbReference type="NCBI Taxonomy" id="409438"/>
    <lineage>
        <taxon>Bacteria</taxon>
        <taxon>Pseudomonadati</taxon>
        <taxon>Pseudomonadota</taxon>
        <taxon>Gammaproteobacteria</taxon>
        <taxon>Enterobacterales</taxon>
        <taxon>Enterobacteriaceae</taxon>
        <taxon>Escherichia</taxon>
    </lineage>
</organism>
<sequence length="375" mass="41285">MSCPVIELTQQLIRRPSLSPDDAGCQALLIERLQAIGFTVERMDFADTQNFWAWRGQGETLAFAGHTDVVPPGDADRWINPPFEPTIRDGMLFGRGAADMKGSLAAMVVAAERFVAQHPNHTGRLAFLITSDEEASAHNGTVKVVEALMSRNERLDYCLVGEPSSIEVVGDVVKNGRRGSLTCNLTIHGVQGHVAYPHLADNPVHRAAPFLNELVAIEWDQGNEFFPATSMQIANIQAGTGSNNVIPGELFVQFNFRFSTELTDEMIKAQVLALLEKHQLRYTVDWWLSGQPFLTARGKLVDAVVNAVEHYNEIKPQLLTTGGTSDGRFIARMGAQVVELGPVNATIHKINECVNAADLQLLARMYQRIMEQLVA</sequence>
<keyword id="KW-0028">Amino-acid biosynthesis</keyword>
<keyword id="KW-0170">Cobalt</keyword>
<keyword id="KW-0220">Diaminopimelate biosynthesis</keyword>
<keyword id="KW-0378">Hydrolase</keyword>
<keyword id="KW-0457">Lysine biosynthesis</keyword>
<keyword id="KW-0479">Metal-binding</keyword>
<keyword id="KW-0862">Zinc</keyword>
<proteinExistence type="inferred from homology"/>
<feature type="chain" id="PRO_0000375556" description="Succinyl-diaminopimelate desuccinylase">
    <location>
        <begin position="1"/>
        <end position="375"/>
    </location>
</feature>
<feature type="active site" evidence="1">
    <location>
        <position position="68"/>
    </location>
</feature>
<feature type="active site" description="Proton acceptor" evidence="1">
    <location>
        <position position="133"/>
    </location>
</feature>
<feature type="binding site" evidence="1">
    <location>
        <position position="66"/>
    </location>
    <ligand>
        <name>Zn(2+)</name>
        <dbReference type="ChEBI" id="CHEBI:29105"/>
        <label>1</label>
    </ligand>
</feature>
<feature type="binding site" evidence="1">
    <location>
        <position position="99"/>
    </location>
    <ligand>
        <name>Zn(2+)</name>
        <dbReference type="ChEBI" id="CHEBI:29105"/>
        <label>1</label>
    </ligand>
</feature>
<feature type="binding site" evidence="1">
    <location>
        <position position="99"/>
    </location>
    <ligand>
        <name>Zn(2+)</name>
        <dbReference type="ChEBI" id="CHEBI:29105"/>
        <label>2</label>
    </ligand>
</feature>
<feature type="binding site" evidence="1">
    <location>
        <position position="134"/>
    </location>
    <ligand>
        <name>Zn(2+)</name>
        <dbReference type="ChEBI" id="CHEBI:29105"/>
        <label>2</label>
    </ligand>
</feature>
<feature type="binding site" evidence="1">
    <location>
        <position position="162"/>
    </location>
    <ligand>
        <name>Zn(2+)</name>
        <dbReference type="ChEBI" id="CHEBI:29105"/>
        <label>1</label>
    </ligand>
</feature>
<feature type="binding site" evidence="1">
    <location>
        <position position="348"/>
    </location>
    <ligand>
        <name>Zn(2+)</name>
        <dbReference type="ChEBI" id="CHEBI:29105"/>
        <label>2</label>
    </ligand>
</feature>
<comment type="function">
    <text evidence="1">Catalyzes the hydrolysis of N-succinyl-L,L-diaminopimelic acid (SDAP), forming succinate and LL-2,6-diaminopimelate (DAP), an intermediate involved in the bacterial biosynthesis of lysine and meso-diaminopimelic acid, an essential component of bacterial cell walls.</text>
</comment>
<comment type="catalytic activity">
    <reaction evidence="1">
        <text>N-succinyl-(2S,6S)-2,6-diaminopimelate + H2O = (2S,6S)-2,6-diaminopimelate + succinate</text>
        <dbReference type="Rhea" id="RHEA:22608"/>
        <dbReference type="ChEBI" id="CHEBI:15377"/>
        <dbReference type="ChEBI" id="CHEBI:30031"/>
        <dbReference type="ChEBI" id="CHEBI:57609"/>
        <dbReference type="ChEBI" id="CHEBI:58087"/>
        <dbReference type="EC" id="3.5.1.18"/>
    </reaction>
</comment>
<comment type="cofactor">
    <cofactor evidence="1">
        <name>Zn(2+)</name>
        <dbReference type="ChEBI" id="CHEBI:29105"/>
    </cofactor>
    <cofactor evidence="1">
        <name>Co(2+)</name>
        <dbReference type="ChEBI" id="CHEBI:48828"/>
    </cofactor>
    <text evidence="1">Binds 2 Zn(2+) or Co(2+) ions per subunit.</text>
</comment>
<comment type="pathway">
    <text evidence="1">Amino-acid biosynthesis; L-lysine biosynthesis via DAP pathway; LL-2,6-diaminopimelate from (S)-tetrahydrodipicolinate (succinylase route): step 3/3.</text>
</comment>
<comment type="subunit">
    <text evidence="1">Homodimer.</text>
</comment>
<comment type="similarity">
    <text evidence="1">Belongs to the peptidase M20A family. DapE subfamily.</text>
</comment>
<reference key="1">
    <citation type="journal article" date="2008" name="DNA Res.">
        <title>Complete genome sequence and comparative analysis of the wild-type commensal Escherichia coli strain SE11 isolated from a healthy adult.</title>
        <authorList>
            <person name="Oshima K."/>
            <person name="Toh H."/>
            <person name="Ogura Y."/>
            <person name="Sasamoto H."/>
            <person name="Morita H."/>
            <person name="Park S.-H."/>
            <person name="Ooka T."/>
            <person name="Iyoda S."/>
            <person name="Taylor T.D."/>
            <person name="Hayashi T."/>
            <person name="Itoh K."/>
            <person name="Hattori M."/>
        </authorList>
    </citation>
    <scope>NUCLEOTIDE SEQUENCE [LARGE SCALE GENOMIC DNA]</scope>
    <source>
        <strain>SE11</strain>
    </source>
</reference>